<keyword id="KW-0597">Phosphoprotein</keyword>
<keyword id="KW-1185">Reference proteome</keyword>
<comment type="similarity">
    <text evidence="3">Belongs to the slowmo family.</text>
</comment>
<dbReference type="EMBL" id="AK003043">
    <property type="protein sequence ID" value="BAB22528.1"/>
    <property type="molecule type" value="mRNA"/>
</dbReference>
<dbReference type="EMBL" id="AK008542">
    <property type="protein sequence ID" value="BAB25731.1"/>
    <property type="molecule type" value="mRNA"/>
</dbReference>
<dbReference type="EMBL" id="AK150668">
    <property type="protein sequence ID" value="BAE29750.1"/>
    <property type="molecule type" value="mRNA"/>
</dbReference>
<dbReference type="EMBL" id="AL670951">
    <property type="status" value="NOT_ANNOTATED_CDS"/>
    <property type="molecule type" value="Genomic_DNA"/>
</dbReference>
<dbReference type="EMBL" id="BC026968">
    <property type="protein sequence ID" value="AAH26968.1"/>
    <property type="molecule type" value="mRNA"/>
</dbReference>
<dbReference type="CCDS" id="CCDS17155.1"/>
<dbReference type="RefSeq" id="NP_079807.1">
    <property type="nucleotide sequence ID" value="NM_025531.2"/>
</dbReference>
<dbReference type="SMR" id="Q9CYY7"/>
<dbReference type="FunCoup" id="Q9CYY7">
    <property type="interactions" value="2550"/>
</dbReference>
<dbReference type="STRING" id="10090.ENSMUSP00000016401"/>
<dbReference type="PhosphoSitePlus" id="Q9CYY7"/>
<dbReference type="PaxDb" id="10090-ENSMUSP00000016401"/>
<dbReference type="PeptideAtlas" id="Q9CYY7"/>
<dbReference type="ProteomicsDB" id="289927"/>
<dbReference type="Pumba" id="Q9CYY7"/>
<dbReference type="Antibodypedia" id="44276">
    <property type="antibodies" value="106 antibodies from 16 providers"/>
</dbReference>
<dbReference type="DNASU" id="66390"/>
<dbReference type="Ensembl" id="ENSMUST00000016401.15">
    <property type="protein sequence ID" value="ENSMUSP00000016401.9"/>
    <property type="gene ID" value="ENSMUSG00000016257.16"/>
</dbReference>
<dbReference type="GeneID" id="66390"/>
<dbReference type="KEGG" id="mmu:66390"/>
<dbReference type="UCSC" id="uc008ofg.1">
    <property type="organism name" value="mouse"/>
</dbReference>
<dbReference type="AGR" id="MGI:1913640"/>
<dbReference type="CTD" id="51012"/>
<dbReference type="MGI" id="MGI:1913640">
    <property type="gene designation" value="Prelid3b"/>
</dbReference>
<dbReference type="VEuPathDB" id="HostDB:ENSMUSG00000016257"/>
<dbReference type="eggNOG" id="KOG3336">
    <property type="taxonomic scope" value="Eukaryota"/>
</dbReference>
<dbReference type="GeneTree" id="ENSGT00950000182810"/>
<dbReference type="HOGENOM" id="CLU_067902_7_0_1"/>
<dbReference type="InParanoid" id="Q9CYY7"/>
<dbReference type="OMA" id="YCPWNEK"/>
<dbReference type="OrthoDB" id="407630at2759"/>
<dbReference type="PhylomeDB" id="Q9CYY7"/>
<dbReference type="TreeFam" id="TF312873"/>
<dbReference type="BioGRID-ORCS" id="66390">
    <property type="hits" value="25 hits in 75 CRISPR screens"/>
</dbReference>
<dbReference type="ChiTaRS" id="Prelid3b">
    <property type="organism name" value="mouse"/>
</dbReference>
<dbReference type="PRO" id="PR:Q9CYY7"/>
<dbReference type="Proteomes" id="UP000000589">
    <property type="component" value="Chromosome 2"/>
</dbReference>
<dbReference type="RNAct" id="Q9CYY7">
    <property type="molecule type" value="protein"/>
</dbReference>
<dbReference type="Bgee" id="ENSMUSG00000016257">
    <property type="expression patterns" value="Expressed in ear vesicle and 252 other cell types or tissues"/>
</dbReference>
<dbReference type="ExpressionAtlas" id="Q9CYY7">
    <property type="expression patterns" value="baseline and differential"/>
</dbReference>
<dbReference type="GO" id="GO:0005758">
    <property type="term" value="C:mitochondrial intermembrane space"/>
    <property type="evidence" value="ECO:0007669"/>
    <property type="project" value="InterPro"/>
</dbReference>
<dbReference type="GO" id="GO:0005739">
    <property type="term" value="C:mitochondrion"/>
    <property type="evidence" value="ECO:0007005"/>
    <property type="project" value="MGI"/>
</dbReference>
<dbReference type="InterPro" id="IPR006797">
    <property type="entry name" value="PRELI/MSF1_dom"/>
</dbReference>
<dbReference type="InterPro" id="IPR037365">
    <property type="entry name" value="Slowmo/Ups"/>
</dbReference>
<dbReference type="PANTHER" id="PTHR11158">
    <property type="entry name" value="MSF1/PX19 RELATED"/>
    <property type="match status" value="1"/>
</dbReference>
<dbReference type="Pfam" id="PF04707">
    <property type="entry name" value="PRELI"/>
    <property type="match status" value="1"/>
</dbReference>
<dbReference type="PROSITE" id="PS50904">
    <property type="entry name" value="PRELI_MSF1"/>
    <property type="match status" value="1"/>
</dbReference>
<sequence>MKIWTSEHVFDHPWETVTTAAMQKYPNPMNPSVVGVDVLDRHVDPSGKLHSHRLLSTEWGLPSIVKSLIGAARTKTYVQEHSVVDPVTRTMELKSTNISFTNMVSVDERLTYKPHLQDPEKTVLTQEALITVKGVSLSSYLEGLMASTISSNASKGREAMEWVIHKLNAEIEELAASARGSIRTPMAAAAALVDK</sequence>
<feature type="chain" id="PRO_0000079430" description="PRELI domain containing protein 3B">
    <location>
        <begin position="1"/>
        <end position="195"/>
    </location>
</feature>
<feature type="domain" description="PRELI/MSF1" evidence="2">
    <location>
        <begin position="1"/>
        <end position="172"/>
    </location>
</feature>
<feature type="modified residue" description="Phosphoserine" evidence="1">
    <location>
        <position position="46"/>
    </location>
</feature>
<feature type="modified residue" description="Phosphoserine" evidence="1">
    <location>
        <position position="51"/>
    </location>
</feature>
<feature type="sequence conflict" description="In Ref. 1; BAE29750." evidence="3" ref="1">
    <original>D</original>
    <variation>N</variation>
    <location>
        <position position="194"/>
    </location>
</feature>
<evidence type="ECO:0000250" key="1">
    <source>
        <dbReference type="UniProtKB" id="Q6P9U4"/>
    </source>
</evidence>
<evidence type="ECO:0000255" key="2">
    <source>
        <dbReference type="PROSITE-ProRule" id="PRU00158"/>
    </source>
</evidence>
<evidence type="ECO:0000305" key="3"/>
<organism>
    <name type="scientific">Mus musculus</name>
    <name type="common">Mouse</name>
    <dbReference type="NCBI Taxonomy" id="10090"/>
    <lineage>
        <taxon>Eukaryota</taxon>
        <taxon>Metazoa</taxon>
        <taxon>Chordata</taxon>
        <taxon>Craniata</taxon>
        <taxon>Vertebrata</taxon>
        <taxon>Euteleostomi</taxon>
        <taxon>Mammalia</taxon>
        <taxon>Eutheria</taxon>
        <taxon>Euarchontoglires</taxon>
        <taxon>Glires</taxon>
        <taxon>Rodentia</taxon>
        <taxon>Myomorpha</taxon>
        <taxon>Muroidea</taxon>
        <taxon>Muridae</taxon>
        <taxon>Murinae</taxon>
        <taxon>Mus</taxon>
        <taxon>Mus</taxon>
    </lineage>
</organism>
<accession>Q9CYY7</accession>
<accession>A2ADM7</accession>
<accession>Q3UC64</accession>
<accession>Q9CRD3</accession>
<reference key="1">
    <citation type="journal article" date="2005" name="Science">
        <title>The transcriptional landscape of the mammalian genome.</title>
        <authorList>
            <person name="Carninci P."/>
            <person name="Kasukawa T."/>
            <person name="Katayama S."/>
            <person name="Gough J."/>
            <person name="Frith M.C."/>
            <person name="Maeda N."/>
            <person name="Oyama R."/>
            <person name="Ravasi T."/>
            <person name="Lenhard B."/>
            <person name="Wells C."/>
            <person name="Kodzius R."/>
            <person name="Shimokawa K."/>
            <person name="Bajic V.B."/>
            <person name="Brenner S.E."/>
            <person name="Batalov S."/>
            <person name="Forrest A.R."/>
            <person name="Zavolan M."/>
            <person name="Davis M.J."/>
            <person name="Wilming L.G."/>
            <person name="Aidinis V."/>
            <person name="Allen J.E."/>
            <person name="Ambesi-Impiombato A."/>
            <person name="Apweiler R."/>
            <person name="Aturaliya R.N."/>
            <person name="Bailey T.L."/>
            <person name="Bansal M."/>
            <person name="Baxter L."/>
            <person name="Beisel K.W."/>
            <person name="Bersano T."/>
            <person name="Bono H."/>
            <person name="Chalk A.M."/>
            <person name="Chiu K.P."/>
            <person name="Choudhary V."/>
            <person name="Christoffels A."/>
            <person name="Clutterbuck D.R."/>
            <person name="Crowe M.L."/>
            <person name="Dalla E."/>
            <person name="Dalrymple B.P."/>
            <person name="de Bono B."/>
            <person name="Della Gatta G."/>
            <person name="di Bernardo D."/>
            <person name="Down T."/>
            <person name="Engstrom P."/>
            <person name="Fagiolini M."/>
            <person name="Faulkner G."/>
            <person name="Fletcher C.F."/>
            <person name="Fukushima T."/>
            <person name="Furuno M."/>
            <person name="Futaki S."/>
            <person name="Gariboldi M."/>
            <person name="Georgii-Hemming P."/>
            <person name="Gingeras T.R."/>
            <person name="Gojobori T."/>
            <person name="Green R.E."/>
            <person name="Gustincich S."/>
            <person name="Harbers M."/>
            <person name="Hayashi Y."/>
            <person name="Hensch T.K."/>
            <person name="Hirokawa N."/>
            <person name="Hill D."/>
            <person name="Huminiecki L."/>
            <person name="Iacono M."/>
            <person name="Ikeo K."/>
            <person name="Iwama A."/>
            <person name="Ishikawa T."/>
            <person name="Jakt M."/>
            <person name="Kanapin A."/>
            <person name="Katoh M."/>
            <person name="Kawasawa Y."/>
            <person name="Kelso J."/>
            <person name="Kitamura H."/>
            <person name="Kitano H."/>
            <person name="Kollias G."/>
            <person name="Krishnan S.P."/>
            <person name="Kruger A."/>
            <person name="Kummerfeld S.K."/>
            <person name="Kurochkin I.V."/>
            <person name="Lareau L.F."/>
            <person name="Lazarevic D."/>
            <person name="Lipovich L."/>
            <person name="Liu J."/>
            <person name="Liuni S."/>
            <person name="McWilliam S."/>
            <person name="Madan Babu M."/>
            <person name="Madera M."/>
            <person name="Marchionni L."/>
            <person name="Matsuda H."/>
            <person name="Matsuzawa S."/>
            <person name="Miki H."/>
            <person name="Mignone F."/>
            <person name="Miyake S."/>
            <person name="Morris K."/>
            <person name="Mottagui-Tabar S."/>
            <person name="Mulder N."/>
            <person name="Nakano N."/>
            <person name="Nakauchi H."/>
            <person name="Ng P."/>
            <person name="Nilsson R."/>
            <person name="Nishiguchi S."/>
            <person name="Nishikawa S."/>
            <person name="Nori F."/>
            <person name="Ohara O."/>
            <person name="Okazaki Y."/>
            <person name="Orlando V."/>
            <person name="Pang K.C."/>
            <person name="Pavan W.J."/>
            <person name="Pavesi G."/>
            <person name="Pesole G."/>
            <person name="Petrovsky N."/>
            <person name="Piazza S."/>
            <person name="Reed J."/>
            <person name="Reid J.F."/>
            <person name="Ring B.Z."/>
            <person name="Ringwald M."/>
            <person name="Rost B."/>
            <person name="Ruan Y."/>
            <person name="Salzberg S.L."/>
            <person name="Sandelin A."/>
            <person name="Schneider C."/>
            <person name="Schoenbach C."/>
            <person name="Sekiguchi K."/>
            <person name="Semple C.A."/>
            <person name="Seno S."/>
            <person name="Sessa L."/>
            <person name="Sheng Y."/>
            <person name="Shibata Y."/>
            <person name="Shimada H."/>
            <person name="Shimada K."/>
            <person name="Silva D."/>
            <person name="Sinclair B."/>
            <person name="Sperling S."/>
            <person name="Stupka E."/>
            <person name="Sugiura K."/>
            <person name="Sultana R."/>
            <person name="Takenaka Y."/>
            <person name="Taki K."/>
            <person name="Tammoja K."/>
            <person name="Tan S.L."/>
            <person name="Tang S."/>
            <person name="Taylor M.S."/>
            <person name="Tegner J."/>
            <person name="Teichmann S.A."/>
            <person name="Ueda H.R."/>
            <person name="van Nimwegen E."/>
            <person name="Verardo R."/>
            <person name="Wei C.L."/>
            <person name="Yagi K."/>
            <person name="Yamanishi H."/>
            <person name="Zabarovsky E."/>
            <person name="Zhu S."/>
            <person name="Zimmer A."/>
            <person name="Hide W."/>
            <person name="Bult C."/>
            <person name="Grimmond S.M."/>
            <person name="Teasdale R.D."/>
            <person name="Liu E.T."/>
            <person name="Brusic V."/>
            <person name="Quackenbush J."/>
            <person name="Wahlestedt C."/>
            <person name="Mattick J.S."/>
            <person name="Hume D.A."/>
            <person name="Kai C."/>
            <person name="Sasaki D."/>
            <person name="Tomaru Y."/>
            <person name="Fukuda S."/>
            <person name="Kanamori-Katayama M."/>
            <person name="Suzuki M."/>
            <person name="Aoki J."/>
            <person name="Arakawa T."/>
            <person name="Iida J."/>
            <person name="Imamura K."/>
            <person name="Itoh M."/>
            <person name="Kato T."/>
            <person name="Kawaji H."/>
            <person name="Kawagashira N."/>
            <person name="Kawashima T."/>
            <person name="Kojima M."/>
            <person name="Kondo S."/>
            <person name="Konno H."/>
            <person name="Nakano K."/>
            <person name="Ninomiya N."/>
            <person name="Nishio T."/>
            <person name="Okada M."/>
            <person name="Plessy C."/>
            <person name="Shibata K."/>
            <person name="Shiraki T."/>
            <person name="Suzuki S."/>
            <person name="Tagami M."/>
            <person name="Waki K."/>
            <person name="Watahiki A."/>
            <person name="Okamura-Oho Y."/>
            <person name="Suzuki H."/>
            <person name="Kawai J."/>
            <person name="Hayashizaki Y."/>
        </authorList>
    </citation>
    <scope>NUCLEOTIDE SEQUENCE [LARGE SCALE MRNA]</scope>
    <source>
        <strain>C57BL/6J</strain>
        <tissue>Bone marrow macrophage</tissue>
        <tissue>Brain</tissue>
        <tissue>Small intestine</tissue>
    </source>
</reference>
<reference key="2">
    <citation type="journal article" date="2009" name="PLoS Biol.">
        <title>Lineage-specific biology revealed by a finished genome assembly of the mouse.</title>
        <authorList>
            <person name="Church D.M."/>
            <person name="Goodstadt L."/>
            <person name="Hillier L.W."/>
            <person name="Zody M.C."/>
            <person name="Goldstein S."/>
            <person name="She X."/>
            <person name="Bult C.J."/>
            <person name="Agarwala R."/>
            <person name="Cherry J.L."/>
            <person name="DiCuccio M."/>
            <person name="Hlavina W."/>
            <person name="Kapustin Y."/>
            <person name="Meric P."/>
            <person name="Maglott D."/>
            <person name="Birtle Z."/>
            <person name="Marques A.C."/>
            <person name="Graves T."/>
            <person name="Zhou S."/>
            <person name="Teague B."/>
            <person name="Potamousis K."/>
            <person name="Churas C."/>
            <person name="Place M."/>
            <person name="Herschleb J."/>
            <person name="Runnheim R."/>
            <person name="Forrest D."/>
            <person name="Amos-Landgraf J."/>
            <person name="Schwartz D.C."/>
            <person name="Cheng Z."/>
            <person name="Lindblad-Toh K."/>
            <person name="Eichler E.E."/>
            <person name="Ponting C.P."/>
        </authorList>
    </citation>
    <scope>NUCLEOTIDE SEQUENCE [LARGE SCALE GENOMIC DNA]</scope>
    <source>
        <strain>C57BL/6J</strain>
    </source>
</reference>
<reference key="3">
    <citation type="journal article" date="2004" name="Genome Res.">
        <title>The status, quality, and expansion of the NIH full-length cDNA project: the Mammalian Gene Collection (MGC).</title>
        <authorList>
            <consortium name="The MGC Project Team"/>
        </authorList>
    </citation>
    <scope>NUCLEOTIDE SEQUENCE [LARGE SCALE MRNA]</scope>
    <source>
        <tissue>Kidney</tissue>
    </source>
</reference>
<reference key="4">
    <citation type="journal article" date="2010" name="Cell">
        <title>A tissue-specific atlas of mouse protein phosphorylation and expression.</title>
        <authorList>
            <person name="Huttlin E.L."/>
            <person name="Jedrychowski M.P."/>
            <person name="Elias J.E."/>
            <person name="Goswami T."/>
            <person name="Rad R."/>
            <person name="Beausoleil S.A."/>
            <person name="Villen J."/>
            <person name="Haas W."/>
            <person name="Sowa M.E."/>
            <person name="Gygi S.P."/>
        </authorList>
    </citation>
    <scope>IDENTIFICATION BY MASS SPECTROMETRY [LARGE SCALE ANALYSIS]</scope>
    <source>
        <tissue>Brown adipose tissue</tissue>
    </source>
</reference>
<gene>
    <name type="primary">Prelid3b</name>
    <name type="synonym">Slmo2</name>
</gene>
<proteinExistence type="evidence at protein level"/>
<protein>
    <recommendedName>
        <fullName>PRELI domain containing protein 3B</fullName>
    </recommendedName>
    <alternativeName>
        <fullName>Protein slowmo homolog 2</fullName>
    </alternativeName>
</protein>
<name>PLD3B_MOUSE</name>